<protein>
    <recommendedName>
        <fullName evidence="1">Gamma-glutamyl phosphate reductase</fullName>
        <shortName evidence="1">GPR</shortName>
        <ecNumber evidence="1">1.2.1.41</ecNumber>
    </recommendedName>
    <alternativeName>
        <fullName evidence="1">Glutamate-5-semialdehyde dehydrogenase</fullName>
    </alternativeName>
    <alternativeName>
        <fullName evidence="1">Glutamyl-gamma-semialdehyde dehydrogenase</fullName>
        <shortName evidence="1">GSA dehydrogenase</shortName>
    </alternativeName>
</protein>
<accession>C0QLF1</accession>
<organism>
    <name type="scientific">Desulforapulum autotrophicum (strain ATCC 43914 / DSM 3382 / VKM B-1955 / HRM2)</name>
    <name type="common">Desulfobacterium autotrophicum</name>
    <dbReference type="NCBI Taxonomy" id="177437"/>
    <lineage>
        <taxon>Bacteria</taxon>
        <taxon>Pseudomonadati</taxon>
        <taxon>Thermodesulfobacteriota</taxon>
        <taxon>Desulfobacteria</taxon>
        <taxon>Desulfobacterales</taxon>
        <taxon>Desulfobacteraceae</taxon>
        <taxon>Desulforapulum</taxon>
    </lineage>
</organism>
<dbReference type="EC" id="1.2.1.41" evidence="1"/>
<dbReference type="EMBL" id="CP001087">
    <property type="protein sequence ID" value="ACN16255.1"/>
    <property type="molecule type" value="Genomic_DNA"/>
</dbReference>
<dbReference type="RefSeq" id="WP_015905017.1">
    <property type="nucleotide sequence ID" value="NC_012108.1"/>
</dbReference>
<dbReference type="SMR" id="C0QLF1"/>
<dbReference type="STRING" id="177437.HRM2_31740"/>
<dbReference type="KEGG" id="dat:HRM2_31740"/>
<dbReference type="eggNOG" id="COG0014">
    <property type="taxonomic scope" value="Bacteria"/>
</dbReference>
<dbReference type="HOGENOM" id="CLU_030231_0_0_7"/>
<dbReference type="OrthoDB" id="9809970at2"/>
<dbReference type="UniPathway" id="UPA00098">
    <property type="reaction ID" value="UER00360"/>
</dbReference>
<dbReference type="Proteomes" id="UP000000442">
    <property type="component" value="Chromosome"/>
</dbReference>
<dbReference type="GO" id="GO:0005737">
    <property type="term" value="C:cytoplasm"/>
    <property type="evidence" value="ECO:0007669"/>
    <property type="project" value="UniProtKB-SubCell"/>
</dbReference>
<dbReference type="GO" id="GO:0004350">
    <property type="term" value="F:glutamate-5-semialdehyde dehydrogenase activity"/>
    <property type="evidence" value="ECO:0007669"/>
    <property type="project" value="UniProtKB-UniRule"/>
</dbReference>
<dbReference type="GO" id="GO:0050661">
    <property type="term" value="F:NADP binding"/>
    <property type="evidence" value="ECO:0007669"/>
    <property type="project" value="InterPro"/>
</dbReference>
<dbReference type="GO" id="GO:0055129">
    <property type="term" value="P:L-proline biosynthetic process"/>
    <property type="evidence" value="ECO:0007669"/>
    <property type="project" value="UniProtKB-UniRule"/>
</dbReference>
<dbReference type="CDD" id="cd07079">
    <property type="entry name" value="ALDH_F18-19_ProA-GPR"/>
    <property type="match status" value="1"/>
</dbReference>
<dbReference type="FunFam" id="3.40.309.10:FF:000006">
    <property type="entry name" value="Gamma-glutamyl phosphate reductase"/>
    <property type="match status" value="1"/>
</dbReference>
<dbReference type="Gene3D" id="3.40.605.10">
    <property type="entry name" value="Aldehyde Dehydrogenase, Chain A, domain 1"/>
    <property type="match status" value="1"/>
</dbReference>
<dbReference type="Gene3D" id="3.40.309.10">
    <property type="entry name" value="Aldehyde Dehydrogenase, Chain A, domain 2"/>
    <property type="match status" value="1"/>
</dbReference>
<dbReference type="HAMAP" id="MF_00412">
    <property type="entry name" value="ProA"/>
    <property type="match status" value="1"/>
</dbReference>
<dbReference type="InterPro" id="IPR016161">
    <property type="entry name" value="Ald_DH/histidinol_DH"/>
</dbReference>
<dbReference type="InterPro" id="IPR016163">
    <property type="entry name" value="Ald_DH_C"/>
</dbReference>
<dbReference type="InterPro" id="IPR016162">
    <property type="entry name" value="Ald_DH_N"/>
</dbReference>
<dbReference type="InterPro" id="IPR015590">
    <property type="entry name" value="Aldehyde_DH_dom"/>
</dbReference>
<dbReference type="InterPro" id="IPR020593">
    <property type="entry name" value="G-glutamylP_reductase_CS"/>
</dbReference>
<dbReference type="InterPro" id="IPR012134">
    <property type="entry name" value="Glu-5-SA_DH"/>
</dbReference>
<dbReference type="InterPro" id="IPR000965">
    <property type="entry name" value="GPR_dom"/>
</dbReference>
<dbReference type="NCBIfam" id="NF001221">
    <property type="entry name" value="PRK00197.1"/>
    <property type="match status" value="1"/>
</dbReference>
<dbReference type="NCBIfam" id="TIGR00407">
    <property type="entry name" value="proA"/>
    <property type="match status" value="1"/>
</dbReference>
<dbReference type="PANTHER" id="PTHR11063:SF8">
    <property type="entry name" value="DELTA-1-PYRROLINE-5-CARBOXYLATE SYNTHASE"/>
    <property type="match status" value="1"/>
</dbReference>
<dbReference type="PANTHER" id="PTHR11063">
    <property type="entry name" value="GLUTAMATE SEMIALDEHYDE DEHYDROGENASE"/>
    <property type="match status" value="1"/>
</dbReference>
<dbReference type="Pfam" id="PF00171">
    <property type="entry name" value="Aldedh"/>
    <property type="match status" value="1"/>
</dbReference>
<dbReference type="PIRSF" id="PIRSF000151">
    <property type="entry name" value="GPR"/>
    <property type="match status" value="1"/>
</dbReference>
<dbReference type="SUPFAM" id="SSF53720">
    <property type="entry name" value="ALDH-like"/>
    <property type="match status" value="1"/>
</dbReference>
<dbReference type="PROSITE" id="PS01223">
    <property type="entry name" value="PROA"/>
    <property type="match status" value="1"/>
</dbReference>
<reference key="1">
    <citation type="journal article" date="2009" name="Environ. Microbiol.">
        <title>Genome sequence of Desulfobacterium autotrophicum HRM2, a marine sulfate reducer oxidizing organic carbon completely to carbon dioxide.</title>
        <authorList>
            <person name="Strittmatter A.W."/>
            <person name="Liesegang H."/>
            <person name="Rabus R."/>
            <person name="Decker I."/>
            <person name="Amann J."/>
            <person name="Andres S."/>
            <person name="Henne A."/>
            <person name="Fricke W.F."/>
            <person name="Martinez-Arias R."/>
            <person name="Bartels D."/>
            <person name="Goesmann A."/>
            <person name="Krause L."/>
            <person name="Puehler A."/>
            <person name="Klenk H.P."/>
            <person name="Richter M."/>
            <person name="Schuler M."/>
            <person name="Gloeckner F.O."/>
            <person name="Meyerdierks A."/>
            <person name="Gottschalk G."/>
            <person name="Amann R."/>
        </authorList>
    </citation>
    <scope>NUCLEOTIDE SEQUENCE [LARGE SCALE GENOMIC DNA]</scope>
    <source>
        <strain>ATCC 43914 / DSM 3382 / VKM B-1955 / HRM2</strain>
    </source>
</reference>
<gene>
    <name evidence="1" type="primary">proA</name>
    <name type="ordered locus">HRM2_31740</name>
</gene>
<evidence type="ECO:0000255" key="1">
    <source>
        <dbReference type="HAMAP-Rule" id="MF_00412"/>
    </source>
</evidence>
<feature type="chain" id="PRO_1000205992" description="Gamma-glutamyl phosphate reductase">
    <location>
        <begin position="1"/>
        <end position="418"/>
    </location>
</feature>
<comment type="function">
    <text evidence="1">Catalyzes the NADPH-dependent reduction of L-glutamate 5-phosphate into L-glutamate 5-semialdehyde and phosphate. The product spontaneously undergoes cyclization to form 1-pyrroline-5-carboxylate.</text>
</comment>
<comment type="catalytic activity">
    <reaction evidence="1">
        <text>L-glutamate 5-semialdehyde + phosphate + NADP(+) = L-glutamyl 5-phosphate + NADPH + H(+)</text>
        <dbReference type="Rhea" id="RHEA:19541"/>
        <dbReference type="ChEBI" id="CHEBI:15378"/>
        <dbReference type="ChEBI" id="CHEBI:43474"/>
        <dbReference type="ChEBI" id="CHEBI:57783"/>
        <dbReference type="ChEBI" id="CHEBI:58066"/>
        <dbReference type="ChEBI" id="CHEBI:58274"/>
        <dbReference type="ChEBI" id="CHEBI:58349"/>
        <dbReference type="EC" id="1.2.1.41"/>
    </reaction>
</comment>
<comment type="pathway">
    <text evidence="1">Amino-acid biosynthesis; L-proline biosynthesis; L-glutamate 5-semialdehyde from L-glutamate: step 2/2.</text>
</comment>
<comment type="subcellular location">
    <subcellularLocation>
        <location evidence="1">Cytoplasm</location>
    </subcellularLocation>
</comment>
<comment type="similarity">
    <text evidence="1">Belongs to the gamma-glutamyl phosphate reductase family.</text>
</comment>
<keyword id="KW-0028">Amino-acid biosynthesis</keyword>
<keyword id="KW-0963">Cytoplasm</keyword>
<keyword id="KW-0521">NADP</keyword>
<keyword id="KW-0560">Oxidoreductase</keyword>
<keyword id="KW-0641">Proline biosynthesis</keyword>
<keyword id="KW-1185">Reference proteome</keyword>
<proteinExistence type="inferred from homology"/>
<name>PROA_DESAH</name>
<sequence length="418" mass="45025">MTLASMIEDIARRARTAARPLATASADTKNTVLAEIARGLAHGKREIEAENQKDLKAARDSGMSAAMIDRLTISDQTLESMIKGLNQVIALPDPVGRITGAWTRPNGLEISKRRIPLGVIAMIYESRPNVTVDAAALCLKAGNAAILRGGSEAFFSNTILARIIGNALETVGISRDSVQVLPVKDRQAITELLQQEAYIDLVIPRGGESLIRFVVKHSTIPVLKHYKGVCHVYVDETCNMDEAVDICINAKTQRPGVCNAMETLLVHERIAPLFLPRMAQAFSAAKVEMRGCPATLAMVPQALPADETDWSTEYLDLIVSVKIVKDLAQAMAHIAVFGSDHTDVIVTDIPENAETFINTVSSSMVGVNVSTRFNDGGELGLGAEIGISTSRLHAFGPMGLEELTSTKFVVVGKGQTRQ</sequence>